<evidence type="ECO:0000250" key="1"/>
<evidence type="ECO:0000250" key="2">
    <source>
        <dbReference type="UniProtKB" id="A0A0A1HA03"/>
    </source>
</evidence>
<evidence type="ECO:0000250" key="3">
    <source>
        <dbReference type="UniProtKB" id="P51094"/>
    </source>
</evidence>
<evidence type="ECO:0000305" key="4"/>
<proteinExistence type="evidence at transcript level"/>
<keyword id="KW-0328">Glycosyltransferase</keyword>
<keyword id="KW-0808">Transferase</keyword>
<reference key="1">
    <citation type="journal article" date="1994" name="DNA Seq.">
        <title>Multiple secondary plant product UDP-glucose glucosyltransferase genes expressed in cassava (Manihot esculenta Crantz) cotyledons.</title>
        <authorList>
            <person name="Hughes J."/>
            <person name="Hughes M.A."/>
        </authorList>
    </citation>
    <scope>NUCLEOTIDE SEQUENCE [MRNA]</scope>
    <source>
        <tissue>Cotyledon</tissue>
    </source>
</reference>
<gene>
    <name type="primary">GT7</name>
    <name type="synonym">UGT73A7</name>
</gene>
<organism>
    <name type="scientific">Manihot esculenta</name>
    <name type="common">Cassava</name>
    <name type="synonym">Jatropha manihot</name>
    <dbReference type="NCBI Taxonomy" id="3983"/>
    <lineage>
        <taxon>Eukaryota</taxon>
        <taxon>Viridiplantae</taxon>
        <taxon>Streptophyta</taxon>
        <taxon>Embryophyta</taxon>
        <taxon>Tracheophyta</taxon>
        <taxon>Spermatophyta</taxon>
        <taxon>Magnoliopsida</taxon>
        <taxon>eudicotyledons</taxon>
        <taxon>Gunneridae</taxon>
        <taxon>Pentapetalae</taxon>
        <taxon>rosids</taxon>
        <taxon>fabids</taxon>
        <taxon>Malpighiales</taxon>
        <taxon>Euphorbiaceae</taxon>
        <taxon>Crotonoideae</taxon>
        <taxon>Manihoteae</taxon>
        <taxon>Manihot</taxon>
    </lineage>
</organism>
<protein>
    <recommendedName>
        <fullName>Anthocyanidin 3-O-glucosyltransferase 7</fullName>
        <ecNumber>2.4.1.115</ecNumber>
    </recommendedName>
    <alternativeName>
        <fullName>Flavonol 3-O-glucosyltransferase 7</fullName>
    </alternativeName>
    <alternativeName>
        <fullName>UDP-glucose flavonoid 3-O-glucosyltransferase 7</fullName>
    </alternativeName>
</protein>
<sequence>TLNLIPGMSKIQIRDLPEGVLFGNLESLFSQMLHNMGRMLPRAAAVLMNSFEELDPTIVSDLNSKFNNILCIGPFNLVSPPPPVPDTYGCMAWLDKQKPASVAYISFGSVATPPPHELVALAEALEASKVPFLWSLKDHSKVHLPNGFLDRTKSHGIVLSWAPQVEILEHAALGVFVTHCGWNSILESIVGGVPMICRPFFGDQRLNGRMVEDVWEIGLLMDGGVLTKNGAIDGLNQILLQGKGKKMRENIKRLKELAKGATEPKGSSSKSFTELANLVRSRGSYEN</sequence>
<feature type="chain" id="PRO_0000074148" description="Anthocyanidin 3-O-glucosyltransferase 7">
    <location>
        <begin position="1" status="less than"/>
        <end position="287"/>
    </location>
</feature>
<feature type="binding site" evidence="2">
    <location>
        <position position="162"/>
    </location>
    <ligand>
        <name>UDP-alpha-D-glucose</name>
        <dbReference type="ChEBI" id="CHEBI:58885"/>
    </ligand>
</feature>
<feature type="binding site" evidence="2">
    <location>
        <position position="164"/>
    </location>
    <ligand>
        <name>UDP-alpha-D-glucose</name>
        <dbReference type="ChEBI" id="CHEBI:58885"/>
    </ligand>
</feature>
<feature type="binding site" evidence="2">
    <location>
        <position position="179"/>
    </location>
    <ligand>
        <name>UDP-alpha-D-glucose</name>
        <dbReference type="ChEBI" id="CHEBI:58885"/>
    </ligand>
</feature>
<feature type="binding site" evidence="2">
    <location>
        <position position="182"/>
    </location>
    <ligand>
        <name>UDP-alpha-D-glucose</name>
        <dbReference type="ChEBI" id="CHEBI:58885"/>
    </ligand>
</feature>
<feature type="binding site" evidence="2">
    <location>
        <position position="183"/>
    </location>
    <ligand>
        <name>UDP-alpha-D-glucose</name>
        <dbReference type="ChEBI" id="CHEBI:58885"/>
    </ligand>
</feature>
<feature type="binding site" evidence="2">
    <location>
        <position position="184"/>
    </location>
    <ligand>
        <name>UDP-alpha-D-glucose</name>
        <dbReference type="ChEBI" id="CHEBI:58885"/>
    </ligand>
</feature>
<feature type="binding site" evidence="2">
    <location>
        <position position="187"/>
    </location>
    <ligand>
        <name>UDP-alpha-D-glucose</name>
        <dbReference type="ChEBI" id="CHEBI:58885"/>
    </ligand>
</feature>
<feature type="binding site" evidence="3">
    <location>
        <position position="202"/>
    </location>
    <ligand>
        <name>an anthocyanidin</name>
        <dbReference type="ChEBI" id="CHEBI:143576"/>
    </ligand>
</feature>
<feature type="binding site" evidence="2">
    <location>
        <position position="203"/>
    </location>
    <ligand>
        <name>UDP-alpha-D-glucose</name>
        <dbReference type="ChEBI" id="CHEBI:58885"/>
    </ligand>
</feature>
<feature type="binding site" evidence="2">
    <location>
        <position position="204"/>
    </location>
    <ligand>
        <name>UDP-alpha-D-glucose</name>
        <dbReference type="ChEBI" id="CHEBI:58885"/>
    </ligand>
</feature>
<feature type="non-terminal residue">
    <location>
        <position position="1"/>
    </location>
</feature>
<comment type="function">
    <text evidence="1">In the presence of other necessary color factors, this glycosylation reaction allows the accumulation of anthocyanin pigments.</text>
</comment>
<comment type="catalytic activity">
    <reaction>
        <text>an anthocyanidin + UDP-alpha-D-glucose + H(+) = an anthocyanidin 3-O-beta-D-glucoside + UDP</text>
        <dbReference type="Rhea" id="RHEA:20093"/>
        <dbReference type="ChEBI" id="CHEBI:15378"/>
        <dbReference type="ChEBI" id="CHEBI:16307"/>
        <dbReference type="ChEBI" id="CHEBI:58223"/>
        <dbReference type="ChEBI" id="CHEBI:58885"/>
        <dbReference type="ChEBI" id="CHEBI:143576"/>
        <dbReference type="EC" id="2.4.1.115"/>
    </reaction>
</comment>
<comment type="pathway">
    <text>Pigment biosynthesis; anthocyanin biosynthesis.</text>
</comment>
<comment type="tissue specificity">
    <text>Expressed in cotyledons, hypocotyls, roots and leaves.</text>
</comment>
<comment type="developmental stage">
    <text>Expressed in all tissues (cotyledon, hypocotyls and roots) at uniform levels at all stages of development.</text>
</comment>
<comment type="similarity">
    <text evidence="4">Belongs to the UDP-glycosyltransferase family.</text>
</comment>
<accession>Q40289</accession>
<dbReference type="EC" id="2.4.1.115"/>
<dbReference type="EMBL" id="X77464">
    <property type="protein sequence ID" value="CAA54614.1"/>
    <property type="molecule type" value="mRNA"/>
</dbReference>
<dbReference type="PIR" id="S41953">
    <property type="entry name" value="S41953"/>
</dbReference>
<dbReference type="SMR" id="Q40289"/>
<dbReference type="CAZy" id="GT1">
    <property type="family name" value="Glycosyltransferase Family 1"/>
</dbReference>
<dbReference type="UniPathway" id="UPA00009"/>
<dbReference type="GO" id="GO:0047213">
    <property type="term" value="F:anthocyanidin 3-O-glucosyltransferase activity"/>
    <property type="evidence" value="ECO:0007669"/>
    <property type="project" value="UniProtKB-EC"/>
</dbReference>
<dbReference type="GO" id="GO:0009718">
    <property type="term" value="P:anthocyanin-containing compound biosynthetic process"/>
    <property type="evidence" value="ECO:0007669"/>
    <property type="project" value="UniProtKB-UniPathway"/>
</dbReference>
<dbReference type="CDD" id="cd03784">
    <property type="entry name" value="GT1_Gtf-like"/>
    <property type="match status" value="1"/>
</dbReference>
<dbReference type="FunFam" id="3.40.50.2000:FF:000091">
    <property type="entry name" value="Glycosyltransferase"/>
    <property type="match status" value="1"/>
</dbReference>
<dbReference type="Gene3D" id="3.40.50.2000">
    <property type="entry name" value="Glycogen Phosphorylase B"/>
    <property type="match status" value="2"/>
</dbReference>
<dbReference type="InterPro" id="IPR002213">
    <property type="entry name" value="UDP_glucos_trans"/>
</dbReference>
<dbReference type="InterPro" id="IPR035595">
    <property type="entry name" value="UDP_glycos_trans_CS"/>
</dbReference>
<dbReference type="PANTHER" id="PTHR48045:SF34">
    <property type="entry name" value="ISOFLAVONE 7-O-GLUCOSYLTRANSFERASE 1-LIKE"/>
    <property type="match status" value="1"/>
</dbReference>
<dbReference type="PANTHER" id="PTHR48045">
    <property type="entry name" value="UDP-GLYCOSYLTRANSFERASE 72B1"/>
    <property type="match status" value="1"/>
</dbReference>
<dbReference type="Pfam" id="PF00201">
    <property type="entry name" value="UDPGT"/>
    <property type="match status" value="1"/>
</dbReference>
<dbReference type="SUPFAM" id="SSF53756">
    <property type="entry name" value="UDP-Glycosyltransferase/glycogen phosphorylase"/>
    <property type="match status" value="1"/>
</dbReference>
<dbReference type="PROSITE" id="PS00375">
    <property type="entry name" value="UDPGT"/>
    <property type="match status" value="1"/>
</dbReference>
<name>UFOG7_MANES</name>